<feature type="chain" id="PRO_0000119885" description="F-box only protein 7">
    <location>
        <begin position="1"/>
        <end position="522"/>
    </location>
</feature>
<feature type="domain" description="F-box" evidence="2">
    <location>
        <begin position="329"/>
        <end position="375"/>
    </location>
</feature>
<feature type="region of interest" description="Ubiquitin-like">
    <location>
        <begin position="1"/>
        <end position="88"/>
    </location>
</feature>
<feature type="region of interest" description="Disordered" evidence="3">
    <location>
        <begin position="85"/>
        <end position="144"/>
    </location>
</feature>
<feature type="region of interest" description="Important for interaction with PINK1" evidence="15">
    <location>
        <begin position="92"/>
        <end position="129"/>
    </location>
</feature>
<feature type="region of interest" description="Important for interaction with CDK6">
    <location>
        <begin position="129"/>
        <end position="169"/>
    </location>
</feature>
<feature type="region of interest" description="Important for dimerization and interaction with PSMF1" evidence="11">
    <location>
        <begin position="180"/>
        <end position="324"/>
    </location>
</feature>
<feature type="region of interest" description="Important for interaction with CDK6">
    <location>
        <begin position="381"/>
        <end position="522"/>
    </location>
</feature>
<feature type="region of interest" description="Disordered" evidence="3">
    <location>
        <begin position="483"/>
        <end position="522"/>
    </location>
</feature>
<feature type="short sequence motif" description="RFDP motif">
    <location>
        <begin position="481"/>
        <end position="484"/>
    </location>
</feature>
<feature type="compositionally biased region" description="Polar residues" evidence="3">
    <location>
        <begin position="87"/>
        <end position="133"/>
    </location>
</feature>
<feature type="modified residue" description="Omega-N-methylarginine" evidence="1">
    <location>
        <position position="432"/>
    </location>
</feature>
<feature type="modified residue" description="Omega-N-methylarginine" evidence="1">
    <location>
        <position position="451"/>
    </location>
</feature>
<feature type="modified residue" description="Asymmetric dimethylarginine" evidence="1">
    <location>
        <position position="518"/>
    </location>
</feature>
<feature type="splice variant" id="VSP_044723" description="In isoform 3." evidence="20">
    <location>
        <begin position="1"/>
        <end position="114"/>
    </location>
</feature>
<feature type="splice variant" id="VSP_041073" description="In isoform 2." evidence="20">
    <location>
        <begin position="1"/>
        <end position="79"/>
    </location>
</feature>
<feature type="splice variant" id="VSP_041074" description="In isoform 2." evidence="20">
    <original>DDIPAPNIPSST</original>
    <variation>MARPPGGSGPLL</variation>
    <location>
        <begin position="80"/>
        <end position="91"/>
    </location>
</feature>
<feature type="sequence variant" id="VAR_084192" description="In PARK15; uncertain significance." evidence="16">
    <original>L</original>
    <variation>R</variation>
    <location>
        <position position="34"/>
    </location>
</feature>
<feature type="sequence variant" id="VAR_021408" description="In dbSNP:rs11107." evidence="4 6 8 12">
    <original>M</original>
    <variation>I</variation>
    <location>
        <position position="115"/>
    </location>
</feature>
<feature type="sequence variant" id="VAR_047938" description="In PARK15; no effect on interaction with PRKN; loss of SIRT7 ubiquitination; dbSNP:rs71799110." evidence="12 15 19">
    <original>R</original>
    <variation>G</variation>
    <location>
        <position position="378"/>
    </location>
</feature>
<feature type="sequence variant" id="VAR_066022" description="Found in two patients with Kufor-Rakeb syndrome also carrying R-877 in ATP13A2; dbSNP:rs148272407." evidence="13">
    <original>R</original>
    <variation>C</variation>
    <location>
        <position position="481"/>
    </location>
</feature>
<feature type="mutagenesis site" description="Impairs interaction with PRKN." evidence="15">
    <original>T</original>
    <variation>M</variation>
    <location>
        <position position="22"/>
    </location>
</feature>
<feature type="mutagenesis site" description="Abolishes interaction with PSMF1." evidence="11">
    <original>V</original>
    <variation>E</variation>
    <location>
        <position position="253"/>
    </location>
</feature>
<feature type="sequence conflict" description="In Ref. 7; AAF04471." evidence="21" ref="7">
    <original>Q</original>
    <variation>H</variation>
    <location>
        <position position="79"/>
    </location>
</feature>
<feature type="sequence conflict" description="In Ref. 7; AAF04471." evidence="21" ref="7">
    <original>A</original>
    <variation>P</variation>
    <location>
        <position position="84"/>
    </location>
</feature>
<feature type="sequence conflict" description="In Ref. 4; BAG63187." evidence="21" ref="4">
    <original>N</original>
    <variation>S</variation>
    <location>
        <position position="154"/>
    </location>
</feature>
<feature type="sequence conflict" description="In Ref. 7; AAF04471." evidence="21" ref="7">
    <original>M</original>
    <variation>L</variation>
    <location>
        <position position="169"/>
    </location>
</feature>
<feature type="sequence conflict" description="In Ref. 7; AAF04471." evidence="21" ref="7">
    <original>M</original>
    <variation>L</variation>
    <location>
        <position position="224"/>
    </location>
</feature>
<feature type="sequence conflict" description="In Ref. 7; AAF04471." evidence="21" ref="7">
    <original>P</original>
    <variation>H</variation>
    <location>
        <position position="241"/>
    </location>
</feature>
<feature type="sequence conflict" description="In Ref. 7; AAF04471." evidence="21" ref="7">
    <original>D</original>
    <variation>N</variation>
    <location>
        <position position="328"/>
    </location>
</feature>
<feature type="sequence conflict" description="In Ref. 7; AAF04471." evidence="21" ref="7">
    <original>M</original>
    <variation>L</variation>
    <location>
        <position position="413"/>
    </location>
</feature>
<feature type="sequence conflict" description="In Ref. 7; AAF04471." evidence="21" ref="7">
    <original>F</original>
    <variation>L</variation>
    <location>
        <position position="475"/>
    </location>
</feature>
<feature type="helix" evidence="23">
    <location>
        <begin position="181"/>
        <end position="190"/>
    </location>
</feature>
<feature type="helix" evidence="23">
    <location>
        <begin position="195"/>
        <end position="209"/>
    </location>
</feature>
<feature type="strand" evidence="23">
    <location>
        <begin position="213"/>
        <end position="216"/>
    </location>
</feature>
<feature type="turn" evidence="23">
    <location>
        <begin position="220"/>
        <end position="222"/>
    </location>
</feature>
<feature type="strand" evidence="23">
    <location>
        <begin position="228"/>
        <end position="230"/>
    </location>
</feature>
<feature type="strand" evidence="23">
    <location>
        <begin position="233"/>
        <end position="239"/>
    </location>
</feature>
<feature type="helix" evidence="22">
    <location>
        <begin position="241"/>
        <end position="243"/>
    </location>
</feature>
<feature type="strand" evidence="23">
    <location>
        <begin position="247"/>
        <end position="255"/>
    </location>
</feature>
<feature type="strand" evidence="23">
    <location>
        <begin position="258"/>
        <end position="267"/>
    </location>
</feature>
<feature type="strand" evidence="23">
    <location>
        <begin position="270"/>
        <end position="279"/>
    </location>
</feature>
<feature type="helix" evidence="23">
    <location>
        <begin position="281"/>
        <end position="283"/>
    </location>
</feature>
<feature type="helix" evidence="23">
    <location>
        <begin position="287"/>
        <end position="289"/>
    </location>
</feature>
<feature type="helix" evidence="23">
    <location>
        <begin position="294"/>
        <end position="297"/>
    </location>
</feature>
<feature type="helix" evidence="23">
    <location>
        <begin position="301"/>
        <end position="311"/>
    </location>
</feature>
<feature type="helix" evidence="23">
    <location>
        <begin position="313"/>
        <end position="323"/>
    </location>
</feature>
<organism>
    <name type="scientific">Homo sapiens</name>
    <name type="common">Human</name>
    <dbReference type="NCBI Taxonomy" id="9606"/>
    <lineage>
        <taxon>Eukaryota</taxon>
        <taxon>Metazoa</taxon>
        <taxon>Chordata</taxon>
        <taxon>Craniata</taxon>
        <taxon>Vertebrata</taxon>
        <taxon>Euteleostomi</taxon>
        <taxon>Mammalia</taxon>
        <taxon>Eutheria</taxon>
        <taxon>Euarchontoglires</taxon>
        <taxon>Primates</taxon>
        <taxon>Haplorrhini</taxon>
        <taxon>Catarrhini</taxon>
        <taxon>Hominidae</taxon>
        <taxon>Homo</taxon>
    </lineage>
</organism>
<proteinExistence type="evidence at protein level"/>
<keyword id="KW-0002">3D-structure</keyword>
<keyword id="KW-0025">Alternative splicing</keyword>
<keyword id="KW-0963">Cytoplasm</keyword>
<keyword id="KW-0225">Disease variant</keyword>
<keyword id="KW-0488">Methylation</keyword>
<keyword id="KW-0496">Mitochondrion</keyword>
<keyword id="KW-0523">Neurodegeneration</keyword>
<keyword id="KW-0539">Nucleus</keyword>
<keyword id="KW-0907">Parkinson disease</keyword>
<keyword id="KW-0908">Parkinsonism</keyword>
<keyword id="KW-1267">Proteomics identification</keyword>
<keyword id="KW-1185">Reference proteome</keyword>
<keyword id="KW-0833">Ubl conjugation pathway</keyword>
<gene>
    <name type="primary">FBXO7</name>
    <name type="synonym">FBX7</name>
</gene>
<evidence type="ECO:0000250" key="1">
    <source>
        <dbReference type="UniProtKB" id="Q3U7U3"/>
    </source>
</evidence>
<evidence type="ECO:0000255" key="2">
    <source>
        <dbReference type="PROSITE-ProRule" id="PRU00080"/>
    </source>
</evidence>
<evidence type="ECO:0000256" key="3">
    <source>
        <dbReference type="SAM" id="MobiDB-lite"/>
    </source>
</evidence>
<evidence type="ECO:0000269" key="4">
    <source>
    </source>
</evidence>
<evidence type="ECO:0000269" key="5">
    <source>
    </source>
</evidence>
<evidence type="ECO:0000269" key="6">
    <source>
    </source>
</evidence>
<evidence type="ECO:0000269" key="7">
    <source>
    </source>
</evidence>
<evidence type="ECO:0000269" key="8">
    <source>
    </source>
</evidence>
<evidence type="ECO:0000269" key="9">
    <source>
    </source>
</evidence>
<evidence type="ECO:0000269" key="10">
    <source>
    </source>
</evidence>
<evidence type="ECO:0000269" key="11">
    <source>
    </source>
</evidence>
<evidence type="ECO:0000269" key="12">
    <source>
    </source>
</evidence>
<evidence type="ECO:0000269" key="13">
    <source>
    </source>
</evidence>
<evidence type="ECO:0000269" key="14">
    <source>
    </source>
</evidence>
<evidence type="ECO:0000269" key="15">
    <source>
    </source>
</evidence>
<evidence type="ECO:0000269" key="16">
    <source>
    </source>
</evidence>
<evidence type="ECO:0000269" key="17">
    <source>
    </source>
</evidence>
<evidence type="ECO:0000269" key="18">
    <source>
    </source>
</evidence>
<evidence type="ECO:0000269" key="19">
    <source>
    </source>
</evidence>
<evidence type="ECO:0000303" key="20">
    <source>
    </source>
</evidence>
<evidence type="ECO:0000305" key="21"/>
<evidence type="ECO:0007829" key="22">
    <source>
        <dbReference type="PDB" id="4L9C"/>
    </source>
</evidence>
<evidence type="ECO:0007829" key="23">
    <source>
        <dbReference type="PDB" id="4L9H"/>
    </source>
</evidence>
<dbReference type="EMBL" id="AF233225">
    <property type="protein sequence ID" value="AAF67155.1"/>
    <property type="molecule type" value="mRNA"/>
</dbReference>
<dbReference type="EMBL" id="AL050254">
    <property type="protein sequence ID" value="CAB43356.1"/>
    <property type="molecule type" value="mRNA"/>
</dbReference>
<dbReference type="EMBL" id="CR456491">
    <property type="protein sequence ID" value="CAG30377.1"/>
    <property type="molecule type" value="mRNA"/>
</dbReference>
<dbReference type="EMBL" id="AK297841">
    <property type="protein sequence ID" value="BAG60175.1"/>
    <property type="molecule type" value="mRNA"/>
</dbReference>
<dbReference type="EMBL" id="AK301716">
    <property type="protein sequence ID" value="BAG63187.1"/>
    <property type="molecule type" value="mRNA"/>
</dbReference>
<dbReference type="EMBL" id="AL021937">
    <property type="status" value="NOT_ANNOTATED_CDS"/>
    <property type="molecule type" value="Genomic_DNA"/>
</dbReference>
<dbReference type="EMBL" id="AL035068">
    <property type="status" value="NOT_ANNOTATED_CDS"/>
    <property type="molecule type" value="Genomic_DNA"/>
</dbReference>
<dbReference type="EMBL" id="Z71183">
    <property type="status" value="NOT_ANNOTATED_CDS"/>
    <property type="molecule type" value="Genomic_DNA"/>
</dbReference>
<dbReference type="EMBL" id="BC008361">
    <property type="protein sequence ID" value="AAH08361.1"/>
    <property type="molecule type" value="mRNA"/>
</dbReference>
<dbReference type="EMBL" id="AF129537">
    <property type="protein sequence ID" value="AAF04471.1"/>
    <property type="status" value="ALT_INIT"/>
    <property type="molecule type" value="mRNA"/>
</dbReference>
<dbReference type="CCDS" id="CCDS13907.1">
    <molecule id="Q9Y3I1-1"/>
</dbReference>
<dbReference type="CCDS" id="CCDS46695.1">
    <molecule id="Q9Y3I1-2"/>
</dbReference>
<dbReference type="CCDS" id="CCDS58806.1">
    <molecule id="Q9Y3I1-3"/>
</dbReference>
<dbReference type="RefSeq" id="NP_001028196.1">
    <molecule id="Q9Y3I1-2"/>
    <property type="nucleotide sequence ID" value="NM_001033024.2"/>
</dbReference>
<dbReference type="RefSeq" id="NP_001244919.1">
    <molecule id="Q9Y3I1-3"/>
    <property type="nucleotide sequence ID" value="NM_001257990.2"/>
</dbReference>
<dbReference type="RefSeq" id="NP_036311.3">
    <molecule id="Q9Y3I1-1"/>
    <property type="nucleotide sequence ID" value="NM_012179.3"/>
</dbReference>
<dbReference type="PDB" id="4L9C">
    <property type="method" value="X-ray"/>
    <property type="resolution" value="2.10 A"/>
    <property type="chains" value="A/B=180-335"/>
</dbReference>
<dbReference type="PDB" id="4L9H">
    <property type="method" value="X-ray"/>
    <property type="resolution" value="2.00 A"/>
    <property type="chains" value="A=180-335"/>
</dbReference>
<dbReference type="PDBsum" id="4L9C"/>
<dbReference type="PDBsum" id="4L9H"/>
<dbReference type="SMR" id="Q9Y3I1"/>
<dbReference type="BioGRID" id="117326">
    <property type="interactions" value="620"/>
</dbReference>
<dbReference type="ComplexPortal" id="CPX-7906">
    <property type="entry name" value="SCF E3 ubiquitin ligase complex, FBXO7 variant"/>
</dbReference>
<dbReference type="DIP" id="DIP-36125N"/>
<dbReference type="FunCoup" id="Q9Y3I1">
    <property type="interactions" value="1528"/>
</dbReference>
<dbReference type="IntAct" id="Q9Y3I1">
    <property type="interactions" value="111"/>
</dbReference>
<dbReference type="MINT" id="Q9Y3I1"/>
<dbReference type="STRING" id="9606.ENSP00000266087"/>
<dbReference type="GlyCosmos" id="Q9Y3I1">
    <property type="glycosylation" value="2 sites, 1 glycan"/>
</dbReference>
<dbReference type="GlyGen" id="Q9Y3I1">
    <property type="glycosylation" value="2 sites, 1 O-linked glycan (2 sites)"/>
</dbReference>
<dbReference type="iPTMnet" id="Q9Y3I1"/>
<dbReference type="PhosphoSitePlus" id="Q9Y3I1"/>
<dbReference type="SwissPalm" id="Q9Y3I1"/>
<dbReference type="BioMuta" id="FBXO7"/>
<dbReference type="DMDM" id="13124249"/>
<dbReference type="jPOST" id="Q9Y3I1"/>
<dbReference type="MassIVE" id="Q9Y3I1"/>
<dbReference type="PaxDb" id="9606-ENSP00000266087"/>
<dbReference type="PeptideAtlas" id="Q9Y3I1"/>
<dbReference type="ProteomicsDB" id="65179"/>
<dbReference type="ProteomicsDB" id="86039">
    <molecule id="Q9Y3I1-1"/>
</dbReference>
<dbReference type="ProteomicsDB" id="86040">
    <molecule id="Q9Y3I1-2"/>
</dbReference>
<dbReference type="Pumba" id="Q9Y3I1"/>
<dbReference type="Antibodypedia" id="25270">
    <property type="antibodies" value="180 antibodies from 32 providers"/>
</dbReference>
<dbReference type="DNASU" id="25793"/>
<dbReference type="Ensembl" id="ENST00000266087.12">
    <molecule id="Q9Y3I1-1"/>
    <property type="protein sequence ID" value="ENSP00000266087.7"/>
    <property type="gene ID" value="ENSG00000100225.18"/>
</dbReference>
<dbReference type="Ensembl" id="ENST00000397426.5">
    <molecule id="Q9Y3I1-3"/>
    <property type="protein sequence ID" value="ENSP00000380571.1"/>
    <property type="gene ID" value="ENSG00000100225.18"/>
</dbReference>
<dbReference type="Ensembl" id="ENST00000452138.3">
    <molecule id="Q9Y3I1-2"/>
    <property type="protein sequence ID" value="ENSP00000388547.2"/>
    <property type="gene ID" value="ENSG00000100225.18"/>
</dbReference>
<dbReference type="GeneID" id="25793"/>
<dbReference type="KEGG" id="hsa:25793"/>
<dbReference type="MANE-Select" id="ENST00000266087.12">
    <property type="protein sequence ID" value="ENSP00000266087.7"/>
    <property type="RefSeq nucleotide sequence ID" value="NM_012179.4"/>
    <property type="RefSeq protein sequence ID" value="NP_036311.3"/>
</dbReference>
<dbReference type="UCSC" id="uc003amq.4">
    <molecule id="Q9Y3I1-1"/>
    <property type="organism name" value="human"/>
</dbReference>
<dbReference type="AGR" id="HGNC:13586"/>
<dbReference type="CTD" id="25793"/>
<dbReference type="DisGeNET" id="25793"/>
<dbReference type="GeneCards" id="FBXO7"/>
<dbReference type="GeneReviews" id="FBXO7"/>
<dbReference type="HGNC" id="HGNC:13586">
    <property type="gene designation" value="FBXO7"/>
</dbReference>
<dbReference type="HPA" id="ENSG00000100225">
    <property type="expression patterns" value="Tissue enhanced (bone)"/>
</dbReference>
<dbReference type="MalaCards" id="FBXO7"/>
<dbReference type="MIM" id="260300">
    <property type="type" value="phenotype"/>
</dbReference>
<dbReference type="MIM" id="605648">
    <property type="type" value="gene"/>
</dbReference>
<dbReference type="neXtProt" id="NX_Q9Y3I1"/>
<dbReference type="OpenTargets" id="ENSG00000100225"/>
<dbReference type="Orphanet" id="171695">
    <property type="disease" value="Parkinsonian-pyramidal syndrome"/>
</dbReference>
<dbReference type="PharmGKB" id="PA28047"/>
<dbReference type="VEuPathDB" id="HostDB:ENSG00000100225"/>
<dbReference type="eggNOG" id="ENOG502QTNJ">
    <property type="taxonomic scope" value="Eukaryota"/>
</dbReference>
<dbReference type="GeneTree" id="ENSGT00390000006670"/>
<dbReference type="HOGENOM" id="CLU_039588_0_0_1"/>
<dbReference type="InParanoid" id="Q9Y3I1"/>
<dbReference type="OMA" id="QRPNLPH"/>
<dbReference type="OrthoDB" id="101791at2759"/>
<dbReference type="PAN-GO" id="Q9Y3I1">
    <property type="GO annotations" value="3 GO annotations based on evolutionary models"/>
</dbReference>
<dbReference type="PhylomeDB" id="Q9Y3I1"/>
<dbReference type="TreeFam" id="TF329830"/>
<dbReference type="PathwayCommons" id="Q9Y3I1"/>
<dbReference type="Reactome" id="R-HSA-8951664">
    <property type="pathway name" value="Neddylation"/>
</dbReference>
<dbReference type="Reactome" id="R-HSA-983168">
    <property type="pathway name" value="Antigen processing: Ubiquitination &amp; Proteasome degradation"/>
</dbReference>
<dbReference type="SignaLink" id="Q9Y3I1"/>
<dbReference type="SIGNOR" id="Q9Y3I1"/>
<dbReference type="UniPathway" id="UPA00143"/>
<dbReference type="BioGRID-ORCS" id="25793">
    <property type="hits" value="41 hits in 1197 CRISPR screens"/>
</dbReference>
<dbReference type="ChiTaRS" id="FBXO7">
    <property type="organism name" value="human"/>
</dbReference>
<dbReference type="EvolutionaryTrace" id="Q9Y3I1"/>
<dbReference type="GeneWiki" id="FBXO7"/>
<dbReference type="GenomeRNAi" id="25793"/>
<dbReference type="Pharos" id="Q9Y3I1">
    <property type="development level" value="Tbio"/>
</dbReference>
<dbReference type="PRO" id="PR:Q9Y3I1"/>
<dbReference type="Proteomes" id="UP000005640">
    <property type="component" value="Chromosome 22"/>
</dbReference>
<dbReference type="RNAct" id="Q9Y3I1">
    <property type="molecule type" value="protein"/>
</dbReference>
<dbReference type="Bgee" id="ENSG00000100225">
    <property type="expression patterns" value="Expressed in trabecular bone tissue and 213 other cell types or tissues"/>
</dbReference>
<dbReference type="ExpressionAtlas" id="Q9Y3I1">
    <property type="expression patterns" value="baseline and differential"/>
</dbReference>
<dbReference type="GO" id="GO:0097414">
    <property type="term" value="C:classical Lewy body"/>
    <property type="evidence" value="ECO:0000314"/>
    <property type="project" value="ParkinsonsUK-UCL"/>
</dbReference>
<dbReference type="GO" id="GO:0005737">
    <property type="term" value="C:cytoplasm"/>
    <property type="evidence" value="ECO:0000314"/>
    <property type="project" value="ParkinsonsUK-UCL"/>
</dbReference>
<dbReference type="GO" id="GO:0005829">
    <property type="term" value="C:cytosol"/>
    <property type="evidence" value="ECO:0000314"/>
    <property type="project" value="HPA"/>
</dbReference>
<dbReference type="GO" id="GO:0097409">
    <property type="term" value="C:glial cytoplasmic inclusion"/>
    <property type="evidence" value="ECO:0000314"/>
    <property type="project" value="ParkinsonsUK-UCL"/>
</dbReference>
<dbReference type="GO" id="GO:1990037">
    <property type="term" value="C:Lewy body core"/>
    <property type="evidence" value="ECO:0000314"/>
    <property type="project" value="ParkinsonsUK-UCL"/>
</dbReference>
<dbReference type="GO" id="GO:1990038">
    <property type="term" value="C:Lewy body corona"/>
    <property type="evidence" value="ECO:0000314"/>
    <property type="project" value="ParkinsonsUK-UCL"/>
</dbReference>
<dbReference type="GO" id="GO:0097462">
    <property type="term" value="C:Lewy neurite"/>
    <property type="evidence" value="ECO:0000314"/>
    <property type="project" value="ParkinsonsUK-UCL"/>
</dbReference>
<dbReference type="GO" id="GO:0005739">
    <property type="term" value="C:mitochondrion"/>
    <property type="evidence" value="ECO:0000314"/>
    <property type="project" value="UniProtKB"/>
</dbReference>
<dbReference type="GO" id="GO:0005654">
    <property type="term" value="C:nucleoplasm"/>
    <property type="evidence" value="ECO:0000314"/>
    <property type="project" value="HPA"/>
</dbReference>
<dbReference type="GO" id="GO:0005634">
    <property type="term" value="C:nucleus"/>
    <property type="evidence" value="ECO:0000314"/>
    <property type="project" value="ParkinsonsUK-UCL"/>
</dbReference>
<dbReference type="GO" id="GO:0032991">
    <property type="term" value="C:protein-containing complex"/>
    <property type="evidence" value="ECO:0000314"/>
    <property type="project" value="LIFEdb"/>
</dbReference>
<dbReference type="GO" id="GO:0019005">
    <property type="term" value="C:SCF ubiquitin ligase complex"/>
    <property type="evidence" value="ECO:0000314"/>
    <property type="project" value="UniProtKB"/>
</dbReference>
<dbReference type="GO" id="GO:0000151">
    <property type="term" value="C:ubiquitin ligase complex"/>
    <property type="evidence" value="ECO:0000314"/>
    <property type="project" value="UniProtKB"/>
</dbReference>
<dbReference type="GO" id="GO:0046982">
    <property type="term" value="F:protein heterodimerization activity"/>
    <property type="evidence" value="ECO:0000353"/>
    <property type="project" value="ParkinsonsUK-UCL"/>
</dbReference>
<dbReference type="GO" id="GO:0019901">
    <property type="term" value="F:protein kinase binding"/>
    <property type="evidence" value="ECO:0000353"/>
    <property type="project" value="ParkinsonsUK-UCL"/>
</dbReference>
<dbReference type="GO" id="GO:0043130">
    <property type="term" value="F:ubiquitin binding"/>
    <property type="evidence" value="ECO:0000314"/>
    <property type="project" value="ParkinsonsUK-UCL"/>
</dbReference>
<dbReference type="GO" id="GO:0031625">
    <property type="term" value="F:ubiquitin protein ligase binding"/>
    <property type="evidence" value="ECO:0000353"/>
    <property type="project" value="ParkinsonsUK-UCL"/>
</dbReference>
<dbReference type="GO" id="GO:1990756">
    <property type="term" value="F:ubiquitin-like ligase-substrate adaptor activity"/>
    <property type="evidence" value="ECO:0000314"/>
    <property type="project" value="UniProtKB"/>
</dbReference>
<dbReference type="GO" id="GO:0004842">
    <property type="term" value="F:ubiquitin-protein transferase activity"/>
    <property type="evidence" value="ECO:0000304"/>
    <property type="project" value="ProtInc"/>
</dbReference>
<dbReference type="GO" id="GO:0000422">
    <property type="term" value="P:autophagy of mitochondrion"/>
    <property type="evidence" value="ECO:0000315"/>
    <property type="project" value="UniProtKB"/>
</dbReference>
<dbReference type="GO" id="GO:0030098">
    <property type="term" value="P:lymphocyte differentiation"/>
    <property type="evidence" value="ECO:0007669"/>
    <property type="project" value="Ensembl"/>
</dbReference>
<dbReference type="GO" id="GO:2000134">
    <property type="term" value="P:negative regulation of G1/S transition of mitotic cell cycle"/>
    <property type="evidence" value="ECO:0007669"/>
    <property type="project" value="Ensembl"/>
</dbReference>
<dbReference type="GO" id="GO:0045620">
    <property type="term" value="P:negative regulation of lymphocyte differentiation"/>
    <property type="evidence" value="ECO:0007669"/>
    <property type="project" value="Ensembl"/>
</dbReference>
<dbReference type="GO" id="GO:1903377">
    <property type="term" value="P:negative regulation of oxidative stress-induced neuron intrinsic apoptotic signaling pathway"/>
    <property type="evidence" value="ECO:0000314"/>
    <property type="project" value="ParkinsonsUK-UCL"/>
</dbReference>
<dbReference type="GO" id="GO:1903599">
    <property type="term" value="P:positive regulation of autophagy of mitochondrion"/>
    <property type="evidence" value="ECO:0000318"/>
    <property type="project" value="GO_Central"/>
</dbReference>
<dbReference type="GO" id="GO:1901526">
    <property type="term" value="P:positive regulation of mitophagy"/>
    <property type="evidence" value="ECO:0000314"/>
    <property type="project" value="ParkinsonsUK-UCL"/>
</dbReference>
<dbReference type="GO" id="GO:0043161">
    <property type="term" value="P:proteasome-mediated ubiquitin-dependent protein catabolic process"/>
    <property type="evidence" value="ECO:0000314"/>
    <property type="project" value="UniProt"/>
</dbReference>
<dbReference type="GO" id="GO:0070936">
    <property type="term" value="P:protein K48-linked ubiquitination"/>
    <property type="evidence" value="ECO:0000314"/>
    <property type="project" value="UniProt"/>
</dbReference>
<dbReference type="GO" id="GO:0006626">
    <property type="term" value="P:protein targeting to mitochondrion"/>
    <property type="evidence" value="ECO:0000315"/>
    <property type="project" value="UniProtKB"/>
</dbReference>
<dbReference type="GO" id="GO:0016567">
    <property type="term" value="P:protein ubiquitination"/>
    <property type="evidence" value="ECO:0000314"/>
    <property type="project" value="ParkinsonsUK-UCL"/>
</dbReference>
<dbReference type="GO" id="GO:0040012">
    <property type="term" value="P:regulation of locomotion"/>
    <property type="evidence" value="ECO:0000314"/>
    <property type="project" value="ParkinsonsUK-UCL"/>
</dbReference>
<dbReference type="GO" id="GO:0010975">
    <property type="term" value="P:regulation of neuron projection development"/>
    <property type="evidence" value="ECO:0000315"/>
    <property type="project" value="ParkinsonsUK-UCL"/>
</dbReference>
<dbReference type="GO" id="GO:0031647">
    <property type="term" value="P:regulation of protein stability"/>
    <property type="evidence" value="ECO:0000314"/>
    <property type="project" value="UniProtKB"/>
</dbReference>
<dbReference type="GO" id="GO:0006511">
    <property type="term" value="P:ubiquitin-dependent protein catabolic process"/>
    <property type="evidence" value="ECO:0000314"/>
    <property type="project" value="ParkinsonsUK-UCL"/>
</dbReference>
<dbReference type="CDD" id="cd22087">
    <property type="entry name" value="F-box_FBXO7"/>
    <property type="match status" value="1"/>
</dbReference>
<dbReference type="FunFam" id="1.20.1280.50:FF:000010">
    <property type="entry name" value="F-box only protein 7"/>
    <property type="match status" value="1"/>
</dbReference>
<dbReference type="FunFam" id="3.40.1000.30:FF:000001">
    <property type="entry name" value="F-box only protein 7"/>
    <property type="match status" value="1"/>
</dbReference>
<dbReference type="Gene3D" id="1.20.1280.50">
    <property type="match status" value="1"/>
</dbReference>
<dbReference type="Gene3D" id="3.40.1000.30">
    <property type="match status" value="1"/>
</dbReference>
<dbReference type="InterPro" id="IPR036047">
    <property type="entry name" value="F-box-like_dom_sf"/>
</dbReference>
<dbReference type="InterPro" id="IPR001810">
    <property type="entry name" value="F-box_dom"/>
</dbReference>
<dbReference type="InterPro" id="IPR047118">
    <property type="entry name" value="Fbxo7"/>
</dbReference>
<dbReference type="InterPro" id="IPR021625">
    <property type="entry name" value="PI31_Prot_N"/>
</dbReference>
<dbReference type="InterPro" id="IPR029071">
    <property type="entry name" value="Ubiquitin-like_domsf"/>
</dbReference>
<dbReference type="PANTHER" id="PTHR15537">
    <property type="entry name" value="F-BOX ONLY PROTEIN 7"/>
    <property type="match status" value="1"/>
</dbReference>
<dbReference type="PANTHER" id="PTHR15537:SF2">
    <property type="entry name" value="F-BOX ONLY PROTEIN 7"/>
    <property type="match status" value="1"/>
</dbReference>
<dbReference type="Pfam" id="PF12937">
    <property type="entry name" value="F-box-like"/>
    <property type="match status" value="1"/>
</dbReference>
<dbReference type="Pfam" id="PF11566">
    <property type="entry name" value="PI31_Prot_N"/>
    <property type="match status" value="1"/>
</dbReference>
<dbReference type="SMART" id="SM00256">
    <property type="entry name" value="FBOX"/>
    <property type="match status" value="1"/>
</dbReference>
<dbReference type="SUPFAM" id="SSF81383">
    <property type="entry name" value="F-box domain"/>
    <property type="match status" value="1"/>
</dbReference>
<dbReference type="SUPFAM" id="SSF54236">
    <property type="entry name" value="Ubiquitin-like"/>
    <property type="match status" value="1"/>
</dbReference>
<dbReference type="PROSITE" id="PS50181">
    <property type="entry name" value="FBOX"/>
    <property type="match status" value="1"/>
</dbReference>
<name>FBX7_HUMAN</name>
<sequence>MRLRVRLLKRTWPLEVPETEPTLGHLRSHLRQSLLCTWGYSSNTRFTITLNYKDPLTGDEETLASYGIVSGDLICLILQDDIPAPNIPSSTDSEHSSLQNNEQPSLATSSNQTSMQDEQPSDSFQGQAAQSGVWNDDSMLGPSQNFEAESIQDNAHMAEGTGFYPSEPMLCSESVEGQVPHSLETLYQSADCSDANDALIVLIHLLMLESGYIPQGTEAKALSMPEKWKLSGVYKLQYMHPLCEGSSATLTCVPLGNLIVVNATLKINNEIRSVKRLQLLPESFICKEKLGENVANIYKDLQKLSRLFKDQLVYPLLAFTRQALNLPDVFGLVVLPLELKLRIFRLLDVRSVLSLSAVCRDLFTASNDPLLWRFLYLRDFRDNTVRVQDTDWKELYRKRHIQRKESPKGRFVMLLPSSTHTIPFYPNPLHPRPFPSSRLPPGIIGGEYDQRPTLPYVGDPISSLIPGPGETPSQFPPLRPRFDPVGPLPGPNPILPGRGGPNDRFPFRPSRGRPTDGRLSFM</sequence>
<comment type="function">
    <text evidence="1 7 10 14 15 17 18 19">Substrate recognition component of a SCF (SKP1-CUL1-F-box protein) E3 ubiquitin-protein ligase complex which mediates the ubiquitination and subsequent proteasomal degradation of target proteins and plays a role in several biological processes such as cell cycle, cell proliferation, or maintenance of chromosome stability (PubMed:15145941, PubMed:34791250). Recognizes and ubiquitinates BIRC2 and the cell cycle regulator DLGAP5 (PubMed:15145941, PubMed:16510124, PubMed:22212761). Plays a role downstream of PINK1 in the clearance of damaged mitochondria via selective autophagy (mitophagy) by targeting PRKN to dysfunctional depolarized mitochondria. Promotes MFN1 ubiquitination. Mediates the ubiquitination and proteasomal degradation of UXT isoform 2, thereby impairing the NF-kappa-B signaling pathway (PubMed:33010352). Inhibits NF-kappa-B pathway also by promoting the ubiquitination of TRAF2 (PubMed:22212761). Affects the assembly state and activity of the proteasome in the cells including neurons by ubiquitinating the proteasomal subunit PSMA2 via 'Lys-63'-linked polyubiquitin chains (By similarity). Promotes 'Lys-48'-linked polyubiquitination SIRT7, leading to the hydrogen peroxide-induced cell death (PubMed:36646384).</text>
</comment>
<comment type="pathway">
    <text>Protein modification; protein ubiquitination.</text>
</comment>
<comment type="subunit">
    <text evidence="5 7 9 10 11 15">Part of the SCF (SKP1-CUL1-F-box) E3 ubiquitin-protein ligase complex SCF(FBXO7) formed of CUL1, SKP1, RBX1 and FBXO7. Interacts via its C-terminal proline-rich region with DLGAP5. Interacts with BIRC2. Interacts with CDK6 and promotes its interaction with D-type cyclin. Interacts with PSMF1.</text>
</comment>
<comment type="subunit">
    <molecule>Isoform 1</molecule>
    <text evidence="15">Interacts (via the N-terminal Ubl domain) with PRKN (PubMed:23933751). Interact (via N-terminal region) with PINK1 (PubMed:23933751).</text>
</comment>
<comment type="subunit">
    <molecule>Isoform 2</molecule>
    <text evidence="15">Interact (via N-terminal region) with PINK1.</text>
</comment>
<comment type="interaction">
    <interactant intactId="EBI-1161222">
        <id>Q9Y3I1</id>
    </interactant>
    <interactant intactId="EBI-348399">
        <id>P22607</id>
        <label>FGFR3</label>
    </interactant>
    <organismsDiffer>false</organismsDiffer>
    <experiments>3</experiments>
</comment>
<comment type="interaction">
    <interactant intactId="EBI-1161222">
        <id>Q9Y3I1</id>
    </interactant>
    <interactant intactId="EBI-2846068">
        <id>Q9BXM7</id>
        <label>PINK1</label>
    </interactant>
    <organismsDiffer>false</organismsDiffer>
    <experiments>8</experiments>
</comment>
<comment type="interaction">
    <interactant intactId="EBI-1161222">
        <id>Q9Y3I1</id>
    </interactant>
    <interactant intactId="EBI-716346">
        <id>O60260</id>
        <label>PRKN</label>
    </interactant>
    <organismsDiffer>false</organismsDiffer>
    <experiments>10</experiments>
</comment>
<comment type="interaction">
    <interactant intactId="EBI-1161222">
        <id>Q9Y3I1</id>
    </interactant>
    <interactant intactId="EBI-348380">
        <id>P25788</id>
        <label>PSMA3</label>
    </interactant>
    <organismsDiffer>false</organismsDiffer>
    <experiments>6</experiments>
</comment>
<comment type="interaction">
    <interactant intactId="EBI-1161222">
        <id>Q9Y3I1</id>
    </interactant>
    <interactant intactId="EBI-355546">
        <id>P61289</id>
        <label>PSME3</label>
    </interactant>
    <organismsDiffer>false</organismsDiffer>
    <experiments>3</experiments>
</comment>
<comment type="interaction">
    <interactant intactId="EBI-1161222">
        <id>Q9Y3I1</id>
    </interactant>
    <interactant intactId="EBI-945916">
        <id>Q92530</id>
        <label>PSMF1</label>
    </interactant>
    <organismsDiffer>false</organismsDiffer>
    <experiments>11</experiments>
</comment>
<comment type="interaction">
    <interactant intactId="EBI-1161222">
        <id>Q9Y3I1</id>
    </interactant>
    <interactant intactId="EBI-307486">
        <id>P63208</id>
        <label>SKP1</label>
    </interactant>
    <organismsDiffer>false</organismsDiffer>
    <experiments>11</experiments>
</comment>
<comment type="interaction">
    <interactant intactId="EBI-1161222">
        <id>Q9Y3I1</id>
    </interactant>
    <interactant intactId="EBI-25900580">
        <id>Q9Y649</id>
    </interactant>
    <organismsDiffer>false</organismsDiffer>
    <experiments>3</experiments>
</comment>
<comment type="interaction">
    <interactant intactId="EBI-9102965">
        <id>Q9Y3I1-1</id>
    </interactant>
    <interactant intactId="EBI-2846068">
        <id>Q9BXM7</id>
        <label>PINK1</label>
    </interactant>
    <organismsDiffer>false</organismsDiffer>
    <experiments>2</experiments>
</comment>
<comment type="interaction">
    <interactant intactId="EBI-9102965">
        <id>Q9Y3I1-1</id>
    </interactant>
    <interactant intactId="EBI-716346">
        <id>O60260</id>
        <label>PRKN</label>
    </interactant>
    <organismsDiffer>false</organismsDiffer>
    <experiments>2</experiments>
</comment>
<comment type="subcellular location">
    <subcellularLocation>
        <location evidence="9 11">Cytoplasm</location>
    </subcellularLocation>
    <subcellularLocation>
        <location evidence="9 11 17">Nucleus</location>
    </subcellularLocation>
    <subcellularLocation>
        <location evidence="15">Mitochondrion</location>
    </subcellularLocation>
    <subcellularLocation>
        <location evidence="15">Cytoplasm</location>
        <location evidence="15">Cytosol</location>
    </subcellularLocation>
    <text evidence="9 15">Predominantly cytoplasmic (PubMed:16096642). A minor proportion is detected in the nucleus (PubMed:16096642). Relocates from the cytosol to depolarized mitochondria (PubMed:23933751).</text>
</comment>
<comment type="alternative products">
    <event type="alternative splicing"/>
    <isoform>
        <id>Q9Y3I1-1</id>
        <name>1</name>
        <sequence type="displayed"/>
    </isoform>
    <isoform>
        <id>Q9Y3I1-2</id>
        <name>2</name>
        <sequence type="described" ref="VSP_041073 VSP_041074"/>
    </isoform>
    <isoform>
        <id>Q9Y3I1-3</id>
        <name>3</name>
        <sequence type="described" ref="VSP_044723"/>
    </isoform>
</comment>
<comment type="domain">
    <text evidence="15">The ubiquitin-like region mediates interaction with PRKN.</text>
</comment>
<comment type="domain">
    <text>The proline-rich region is important for protein-protein interactions.</text>
</comment>
<comment type="disease" evidence="12 15 16 19">
    <disease id="DI-02139">
        <name>Parkinson disease 15</name>
        <acronym>PARK15</acronym>
        <description>A neurodegenerative disorder characterized by parkinsonian and pyramidal signs. Clinical manifestations include tremor, bradykinesia, rigidity, postural instability, spasticity, mainly in the lower limbs, and hyperreflexia.</description>
        <dbReference type="MIM" id="260300"/>
    </disease>
    <text>The disease is caused by variants affecting the gene represented in this entry.</text>
</comment>
<comment type="sequence caution" evidence="21">
    <conflict type="erroneous initiation">
        <sequence resource="EMBL-CDS" id="AAF04471"/>
    </conflict>
    <text>Extended N-terminus.</text>
</comment>
<accession>Q9Y3I1</accession>
<accession>B4DNB3</accession>
<accession>B4DWX5</accession>
<accession>Q5TGC4</accession>
<accession>Q5TI86</accession>
<accession>Q96HM6</accession>
<accession>Q9UF21</accession>
<accession>Q9UKT2</accession>
<protein>
    <recommendedName>
        <fullName>F-box only protein 7</fullName>
    </recommendedName>
</protein>
<reference key="1">
    <citation type="journal article" date="2000" name="Genomics">
        <title>cDNA cloning and expression analysis of new members of the mammalian F-box protein family.</title>
        <authorList>
            <person name="Ilyin G.P."/>
            <person name="Rialland M."/>
            <person name="Pigeon C."/>
            <person name="Guguen-Guillouzo C."/>
        </authorList>
    </citation>
    <scope>NUCLEOTIDE SEQUENCE [MRNA] (ISOFORM 1)</scope>
</reference>
<reference key="2">
    <citation type="journal article" date="2003" name="Genome Res.">
        <title>Reevaluating human gene annotation: a second-generation analysis of chromosome 22.</title>
        <authorList>
            <person name="Collins J.E."/>
            <person name="Goward M.E."/>
            <person name="Cole C.G."/>
            <person name="Smink L.J."/>
            <person name="Huckle E.J."/>
            <person name="Knowles S."/>
            <person name="Bye J.M."/>
            <person name="Beare D.M."/>
            <person name="Dunham I."/>
        </authorList>
    </citation>
    <scope>NUCLEOTIDE SEQUENCE [LARGE SCALE MRNA] (ISOFORM 1)</scope>
</reference>
<reference key="3">
    <citation type="journal article" date="2004" name="Genome Biol.">
        <title>A genome annotation-driven approach to cloning the human ORFeome.</title>
        <authorList>
            <person name="Collins J.E."/>
            <person name="Wright C.L."/>
            <person name="Edwards C.A."/>
            <person name="Davis M.P."/>
            <person name="Grinham J.A."/>
            <person name="Cole C.G."/>
            <person name="Goward M.E."/>
            <person name="Aguado B."/>
            <person name="Mallya M."/>
            <person name="Mokrab Y."/>
            <person name="Huckle E.J."/>
            <person name="Beare D.M."/>
            <person name="Dunham I."/>
        </authorList>
    </citation>
    <scope>NUCLEOTIDE SEQUENCE [LARGE SCALE MRNA] (ISOFORM 1)</scope>
</reference>
<reference key="4">
    <citation type="journal article" date="2004" name="Nat. Genet.">
        <title>Complete sequencing and characterization of 21,243 full-length human cDNAs.</title>
        <authorList>
            <person name="Ota T."/>
            <person name="Suzuki Y."/>
            <person name="Nishikawa T."/>
            <person name="Otsuki T."/>
            <person name="Sugiyama T."/>
            <person name="Irie R."/>
            <person name="Wakamatsu A."/>
            <person name="Hayashi K."/>
            <person name="Sato H."/>
            <person name="Nagai K."/>
            <person name="Kimura K."/>
            <person name="Makita H."/>
            <person name="Sekine M."/>
            <person name="Obayashi M."/>
            <person name="Nishi T."/>
            <person name="Shibahara T."/>
            <person name="Tanaka T."/>
            <person name="Ishii S."/>
            <person name="Yamamoto J."/>
            <person name="Saito K."/>
            <person name="Kawai Y."/>
            <person name="Isono Y."/>
            <person name="Nakamura Y."/>
            <person name="Nagahari K."/>
            <person name="Murakami K."/>
            <person name="Yasuda T."/>
            <person name="Iwayanagi T."/>
            <person name="Wagatsuma M."/>
            <person name="Shiratori A."/>
            <person name="Sudo H."/>
            <person name="Hosoiri T."/>
            <person name="Kaku Y."/>
            <person name="Kodaira H."/>
            <person name="Kondo H."/>
            <person name="Sugawara M."/>
            <person name="Takahashi M."/>
            <person name="Kanda K."/>
            <person name="Yokoi T."/>
            <person name="Furuya T."/>
            <person name="Kikkawa E."/>
            <person name="Omura Y."/>
            <person name="Abe K."/>
            <person name="Kamihara K."/>
            <person name="Katsuta N."/>
            <person name="Sato K."/>
            <person name="Tanikawa M."/>
            <person name="Yamazaki M."/>
            <person name="Ninomiya K."/>
            <person name="Ishibashi T."/>
            <person name="Yamashita H."/>
            <person name="Murakawa K."/>
            <person name="Fujimori K."/>
            <person name="Tanai H."/>
            <person name="Kimata M."/>
            <person name="Watanabe M."/>
            <person name="Hiraoka S."/>
            <person name="Chiba Y."/>
            <person name="Ishida S."/>
            <person name="Ono Y."/>
            <person name="Takiguchi S."/>
            <person name="Watanabe S."/>
            <person name="Yosida M."/>
            <person name="Hotuta T."/>
            <person name="Kusano J."/>
            <person name="Kanehori K."/>
            <person name="Takahashi-Fujii A."/>
            <person name="Hara H."/>
            <person name="Tanase T.-O."/>
            <person name="Nomura Y."/>
            <person name="Togiya S."/>
            <person name="Komai F."/>
            <person name="Hara R."/>
            <person name="Takeuchi K."/>
            <person name="Arita M."/>
            <person name="Imose N."/>
            <person name="Musashino K."/>
            <person name="Yuuki H."/>
            <person name="Oshima A."/>
            <person name="Sasaki N."/>
            <person name="Aotsuka S."/>
            <person name="Yoshikawa Y."/>
            <person name="Matsunawa H."/>
            <person name="Ichihara T."/>
            <person name="Shiohata N."/>
            <person name="Sano S."/>
            <person name="Moriya S."/>
            <person name="Momiyama H."/>
            <person name="Satoh N."/>
            <person name="Takami S."/>
            <person name="Terashima Y."/>
            <person name="Suzuki O."/>
            <person name="Nakagawa S."/>
            <person name="Senoh A."/>
            <person name="Mizoguchi H."/>
            <person name="Goto Y."/>
            <person name="Shimizu F."/>
            <person name="Wakebe H."/>
            <person name="Hishigaki H."/>
            <person name="Watanabe T."/>
            <person name="Sugiyama A."/>
            <person name="Takemoto M."/>
            <person name="Kawakami B."/>
            <person name="Yamazaki M."/>
            <person name="Watanabe K."/>
            <person name="Kumagai A."/>
            <person name="Itakura S."/>
            <person name="Fukuzumi Y."/>
            <person name="Fujimori Y."/>
            <person name="Komiyama M."/>
            <person name="Tashiro H."/>
            <person name="Tanigami A."/>
            <person name="Fujiwara T."/>
            <person name="Ono T."/>
            <person name="Yamada K."/>
            <person name="Fujii Y."/>
            <person name="Ozaki K."/>
            <person name="Hirao M."/>
            <person name="Ohmori Y."/>
            <person name="Kawabata A."/>
            <person name="Hikiji T."/>
            <person name="Kobatake N."/>
            <person name="Inagaki H."/>
            <person name="Ikema Y."/>
            <person name="Okamoto S."/>
            <person name="Okitani R."/>
            <person name="Kawakami T."/>
            <person name="Noguchi S."/>
            <person name="Itoh T."/>
            <person name="Shigeta K."/>
            <person name="Senba T."/>
            <person name="Matsumura K."/>
            <person name="Nakajima Y."/>
            <person name="Mizuno T."/>
            <person name="Morinaga M."/>
            <person name="Sasaki M."/>
            <person name="Togashi T."/>
            <person name="Oyama M."/>
            <person name="Hata H."/>
            <person name="Watanabe M."/>
            <person name="Komatsu T."/>
            <person name="Mizushima-Sugano J."/>
            <person name="Satoh T."/>
            <person name="Shirai Y."/>
            <person name="Takahashi Y."/>
            <person name="Nakagawa K."/>
            <person name="Okumura K."/>
            <person name="Nagase T."/>
            <person name="Nomura N."/>
            <person name="Kikuchi H."/>
            <person name="Masuho Y."/>
            <person name="Yamashita R."/>
            <person name="Nakai K."/>
            <person name="Yada T."/>
            <person name="Nakamura Y."/>
            <person name="Ohara O."/>
            <person name="Isogai T."/>
            <person name="Sugano S."/>
        </authorList>
    </citation>
    <scope>NUCLEOTIDE SEQUENCE [LARGE SCALE MRNA] (ISOFORMS 2 AND 3)</scope>
    <scope>VARIANT ILE-115</scope>
    <source>
        <tissue>Heart</tissue>
        <tissue>Testis</tissue>
    </source>
</reference>
<reference key="5">
    <citation type="journal article" date="1999" name="Nature">
        <title>The DNA sequence of human chromosome 22.</title>
        <authorList>
            <person name="Dunham I."/>
            <person name="Hunt A.R."/>
            <person name="Collins J.E."/>
            <person name="Bruskiewich R."/>
            <person name="Beare D.M."/>
            <person name="Clamp M."/>
            <person name="Smink L.J."/>
            <person name="Ainscough R."/>
            <person name="Almeida J.P."/>
            <person name="Babbage A.K."/>
            <person name="Bagguley C."/>
            <person name="Bailey J."/>
            <person name="Barlow K.F."/>
            <person name="Bates K.N."/>
            <person name="Beasley O.P."/>
            <person name="Bird C.P."/>
            <person name="Blakey S.E."/>
            <person name="Bridgeman A.M."/>
            <person name="Buck D."/>
            <person name="Burgess J."/>
            <person name="Burrill W.D."/>
            <person name="Burton J."/>
            <person name="Carder C."/>
            <person name="Carter N.P."/>
            <person name="Chen Y."/>
            <person name="Clark G."/>
            <person name="Clegg S.M."/>
            <person name="Cobley V.E."/>
            <person name="Cole C.G."/>
            <person name="Collier R.E."/>
            <person name="Connor R."/>
            <person name="Conroy D."/>
            <person name="Corby N.R."/>
            <person name="Coville G.J."/>
            <person name="Cox A.V."/>
            <person name="Davis J."/>
            <person name="Dawson E."/>
            <person name="Dhami P.D."/>
            <person name="Dockree C."/>
            <person name="Dodsworth S.J."/>
            <person name="Durbin R.M."/>
            <person name="Ellington A.G."/>
            <person name="Evans K.L."/>
            <person name="Fey J.M."/>
            <person name="Fleming K."/>
            <person name="French L."/>
            <person name="Garner A.A."/>
            <person name="Gilbert J.G.R."/>
            <person name="Goward M.E."/>
            <person name="Grafham D.V."/>
            <person name="Griffiths M.N.D."/>
            <person name="Hall C."/>
            <person name="Hall R.E."/>
            <person name="Hall-Tamlyn G."/>
            <person name="Heathcott R.W."/>
            <person name="Ho S."/>
            <person name="Holmes S."/>
            <person name="Hunt S.E."/>
            <person name="Jones M.C."/>
            <person name="Kershaw J."/>
            <person name="Kimberley A.M."/>
            <person name="King A."/>
            <person name="Laird G.K."/>
            <person name="Langford C.F."/>
            <person name="Leversha M.A."/>
            <person name="Lloyd C."/>
            <person name="Lloyd D.M."/>
            <person name="Martyn I.D."/>
            <person name="Mashreghi-Mohammadi M."/>
            <person name="Matthews L.H."/>
            <person name="Mccann O.T."/>
            <person name="Mcclay J."/>
            <person name="Mclaren S."/>
            <person name="McMurray A.A."/>
            <person name="Milne S.A."/>
            <person name="Mortimore B.J."/>
            <person name="Odell C.N."/>
            <person name="Pavitt R."/>
            <person name="Pearce A.V."/>
            <person name="Pearson D."/>
            <person name="Phillimore B.J.C.T."/>
            <person name="Phillips S.H."/>
            <person name="Plumb R.W."/>
            <person name="Ramsay H."/>
            <person name="Ramsey Y."/>
            <person name="Rogers L."/>
            <person name="Ross M.T."/>
            <person name="Scott C.E."/>
            <person name="Sehra H.K."/>
            <person name="Skuce C.D."/>
            <person name="Smalley S."/>
            <person name="Smith M.L."/>
            <person name="Soderlund C."/>
            <person name="Spragon L."/>
            <person name="Steward C.A."/>
            <person name="Sulston J.E."/>
            <person name="Swann R.M."/>
            <person name="Vaudin M."/>
            <person name="Wall M."/>
            <person name="Wallis J.M."/>
            <person name="Whiteley M.N."/>
            <person name="Willey D.L."/>
            <person name="Williams L."/>
            <person name="Williams S.A."/>
            <person name="Williamson H."/>
            <person name="Wilmer T.E."/>
            <person name="Wilming L."/>
            <person name="Wright C.L."/>
            <person name="Hubbard T."/>
            <person name="Bentley D.R."/>
            <person name="Beck S."/>
            <person name="Rogers J."/>
            <person name="Shimizu N."/>
            <person name="Minoshima S."/>
            <person name="Kawasaki K."/>
            <person name="Sasaki T."/>
            <person name="Asakawa S."/>
            <person name="Kudoh J."/>
            <person name="Shintani A."/>
            <person name="Shibuya K."/>
            <person name="Yoshizaki Y."/>
            <person name="Aoki N."/>
            <person name="Mitsuyama S."/>
            <person name="Roe B.A."/>
            <person name="Chen F."/>
            <person name="Chu L."/>
            <person name="Crabtree J."/>
            <person name="Deschamps S."/>
            <person name="Do A."/>
            <person name="Do T."/>
            <person name="Dorman A."/>
            <person name="Fang F."/>
            <person name="Fu Y."/>
            <person name="Hu P."/>
            <person name="Hua A."/>
            <person name="Kenton S."/>
            <person name="Lai H."/>
            <person name="Lao H.I."/>
            <person name="Lewis J."/>
            <person name="Lewis S."/>
            <person name="Lin S.-P."/>
            <person name="Loh P."/>
            <person name="Malaj E."/>
            <person name="Nguyen T."/>
            <person name="Pan H."/>
            <person name="Phan S."/>
            <person name="Qi S."/>
            <person name="Qian Y."/>
            <person name="Ray L."/>
            <person name="Ren Q."/>
            <person name="Shaull S."/>
            <person name="Sloan D."/>
            <person name="Song L."/>
            <person name="Wang Q."/>
            <person name="Wang Y."/>
            <person name="Wang Z."/>
            <person name="White J."/>
            <person name="Willingham D."/>
            <person name="Wu H."/>
            <person name="Yao Z."/>
            <person name="Zhan M."/>
            <person name="Zhang G."/>
            <person name="Chissoe S."/>
            <person name="Murray J."/>
            <person name="Miller N."/>
            <person name="Minx P."/>
            <person name="Fulton R."/>
            <person name="Johnson D."/>
            <person name="Bemis G."/>
            <person name="Bentley D."/>
            <person name="Bradshaw H."/>
            <person name="Bourne S."/>
            <person name="Cordes M."/>
            <person name="Du Z."/>
            <person name="Fulton L."/>
            <person name="Goela D."/>
            <person name="Graves T."/>
            <person name="Hawkins J."/>
            <person name="Hinds K."/>
            <person name="Kemp K."/>
            <person name="Latreille P."/>
            <person name="Layman D."/>
            <person name="Ozersky P."/>
            <person name="Rohlfing T."/>
            <person name="Scheet P."/>
            <person name="Walker C."/>
            <person name="Wamsley A."/>
            <person name="Wohldmann P."/>
            <person name="Pepin K."/>
            <person name="Nelson J."/>
            <person name="Korf I."/>
            <person name="Bedell J.A."/>
            <person name="Hillier L.W."/>
            <person name="Mardis E."/>
            <person name="Waterston R."/>
            <person name="Wilson R."/>
            <person name="Emanuel B.S."/>
            <person name="Shaikh T."/>
            <person name="Kurahashi H."/>
            <person name="Saitta S."/>
            <person name="Budarf M.L."/>
            <person name="McDermid H.E."/>
            <person name="Johnson A."/>
            <person name="Wong A.C.C."/>
            <person name="Morrow B.E."/>
            <person name="Edelmann L."/>
            <person name="Kim U.J."/>
            <person name="Shizuya H."/>
            <person name="Simon M.I."/>
            <person name="Dumanski J.P."/>
            <person name="Peyrard M."/>
            <person name="Kedra D."/>
            <person name="Seroussi E."/>
            <person name="Fransson I."/>
            <person name="Tapia I."/>
            <person name="Bruder C.E."/>
            <person name="O'Brien K.P."/>
            <person name="Wilkinson P."/>
            <person name="Bodenteich A."/>
            <person name="Hartman K."/>
            <person name="Hu X."/>
            <person name="Khan A.S."/>
            <person name="Lane L."/>
            <person name="Tilahun Y."/>
            <person name="Wright H."/>
        </authorList>
    </citation>
    <scope>NUCLEOTIDE SEQUENCE [LARGE SCALE GENOMIC DNA]</scope>
</reference>
<reference key="6">
    <citation type="journal article" date="2004" name="Genome Res.">
        <title>The status, quality, and expansion of the NIH full-length cDNA project: the Mammalian Gene Collection (MGC).</title>
        <authorList>
            <consortium name="The MGC Project Team"/>
        </authorList>
    </citation>
    <scope>NUCLEOTIDE SEQUENCE [LARGE SCALE MRNA] (ISOFORM 1)</scope>
    <scope>VARIANT ILE-115</scope>
    <source>
        <tissue>Pancreas</tissue>
    </source>
</reference>
<reference key="7">
    <citation type="journal article" date="1999" name="Curr. Biol.">
        <title>Identification of a family of human F-box proteins.</title>
        <authorList>
            <person name="Cenciarelli C."/>
            <person name="Chiaur D.S."/>
            <person name="Guardavaccaro D."/>
            <person name="Parks W."/>
            <person name="Vidal M."/>
            <person name="Pagano M."/>
        </authorList>
    </citation>
    <scope>NUCLEOTIDE SEQUENCE [MRNA] OF 42-522 (ISOFORM 1)</scope>
    <scope>VARIANT ILE-115</scope>
</reference>
<reference key="8">
    <citation type="journal article" date="2003" name="Oncogene">
        <title>Identification of a novel cell cycle regulated gene, HURP, overexpressed in human hepatocellular carcinoma.</title>
        <authorList>
            <person name="Tsou A.-P."/>
            <person name="Yang C.-W."/>
            <person name="Huang C.-Y.F."/>
            <person name="Yu R.C.-T."/>
            <person name="Lee Y.-C.G."/>
            <person name="Chang C.-W."/>
            <person name="Chen B.-R."/>
            <person name="Chung Y.-F."/>
            <person name="Fann M.-J."/>
            <person name="Chi C.-W."/>
            <person name="Chiu J.-H."/>
            <person name="Chou C.-K."/>
        </authorList>
    </citation>
    <scope>INTERACTION WITH DLGAP5</scope>
    <scope>IDENTIFICATION IN SCF COMPLEX</scope>
</reference>
<reference key="9">
    <citation type="journal article" date="2004" name="J. Biol. Chem.">
        <title>Fbx7 functions in the SCF complex regulating Cdk1-cyclin B-phosphorylated hepatoma up-regulated protein (HURP) proteolysis by a proline-rich region.</title>
        <authorList>
            <person name="Hsu J.-M."/>
            <person name="Lee Y.-C.G."/>
            <person name="Yu C.-T.R."/>
            <person name="Huang C.-Y.F."/>
        </authorList>
    </citation>
    <scope>INTERACTION WITH DLGAP5; CUL1 AND SKP1</scope>
    <scope>FUNCTION IN UBIQUITINATION OF DLGAP5</scope>
</reference>
<reference key="10">
    <citation type="journal article" date="2005" name="EMBO J.">
        <title>Transforming activity of Fbxo7 is mediated specifically through regulation of cyclin D/cdk6.</title>
        <authorList>
            <person name="Laman H."/>
            <person name="Funes J.M."/>
            <person name="Ye H."/>
            <person name="Henderson S."/>
            <person name="Galinanes-Garcia L."/>
            <person name="Hara E."/>
            <person name="Knowles P."/>
            <person name="McDonald N."/>
            <person name="Boshoff C."/>
        </authorList>
    </citation>
    <scope>INTERACTION WITH CDK6</scope>
    <scope>SUBCELLULAR LOCATION</scope>
</reference>
<reference key="11">
    <citation type="journal article" date="2006" name="Biochem. Biophys. Res. Commun.">
        <title>The F-box protein Fbxo7 interacts with human inhibitor of apoptosis protein cIAP1 and promotes cIAP1 ubiquitination.</title>
        <authorList>
            <person name="Chang Y.F."/>
            <person name="Cheng C.M."/>
            <person name="Chang L.K."/>
            <person name="Jong Y.J."/>
            <person name="Yuo C.Y."/>
        </authorList>
    </citation>
    <scope>INTERACTION WITH BIRC2</scope>
    <scope>FUNCTION IN UBIQUITINATION OF BIRC2</scope>
</reference>
<reference key="12">
    <citation type="journal article" date="2008" name="J. Biol. Chem.">
        <title>Structure of a conserved dimerization domain within the F-box protein Fbxo7 and the PI31 proteasome inhibitor.</title>
        <authorList>
            <person name="Kirk R."/>
            <person name="Laman H."/>
            <person name="Knowles P.P."/>
            <person name="Murray-Rust J."/>
            <person name="Lomonosov M."/>
            <person name="Meziane E.K."/>
            <person name="McDonald N.Q."/>
        </authorList>
    </citation>
    <scope>INTERACTION WITH SKP1; PSMF1 AND CDK6</scope>
    <scope>SUBCELLULAR LOCATION</scope>
    <scope>SUBUNIT</scope>
    <scope>IDENTIFICATION IN A COMPLEX WITH SKP1 AND CUL1</scope>
    <scope>MUTAGENESIS OF VAL-253</scope>
</reference>
<reference key="13">
    <citation type="journal article" date="2012" name="J. Cell. Mol. Med.">
        <title>Identification of F-box only protein 7 as a negative regulator of NF-kappaB signalling.</title>
        <authorList>
            <person name="Kuiken H.J."/>
            <person name="Egan D.A."/>
            <person name="Laman H."/>
            <person name="Bernards R."/>
            <person name="Beijersbergen R.L."/>
            <person name="Dirac A.M."/>
        </authorList>
    </citation>
    <scope>FUNCTION IN UBIQUITINATION OF TRAF2 AND BIRC2</scope>
</reference>
<reference key="14">
    <citation type="journal article" date="2013" name="Nat. Neurosci.">
        <title>The Parkinson's disease-linked proteins Fbxo7 and Parkin interact to mediate mitophagy.</title>
        <authorList>
            <person name="Burchell V.S."/>
            <person name="Nelson D.E."/>
            <person name="Sanchez-Martinez A."/>
            <person name="Delgado-Camprubi M."/>
            <person name="Ivatt R.M."/>
            <person name="Pogson J.H."/>
            <person name="Randle S.J."/>
            <person name="Wray S."/>
            <person name="Lewis P.A."/>
            <person name="Houlden H."/>
            <person name="Abramov A.Y."/>
            <person name="Hardy J."/>
            <person name="Wood N.W."/>
            <person name="Whitworth A.J."/>
            <person name="Laman H."/>
            <person name="Plun-Favreau H."/>
        </authorList>
    </citation>
    <scope>FUNCTION</scope>
    <scope>INTERACTION WITH PRKN AND PINK1</scope>
    <scope>SUBCELLULAR LOCATION</scope>
    <scope>MUTAGENESIS OF THR-22</scope>
    <scope>CHARACTERIZATION OF VARIANT PARK15 GLY-378</scope>
</reference>
<reference key="15">
    <citation type="journal article" date="2021" name="Biochim. Biophys. Acta">
        <title>The E3 ubiquitin ligase SCF(Fbxo7) mediates proteasomal degradation of UXT isoform 2 (UXT-V2) to inhibit the NF-kappaB signaling pathway.</title>
        <authorList>
            <person name="Spagnol V."/>
            <person name="Oliveira C.A.B."/>
            <person name="Randle S.J."/>
            <person name="Passos P.M.S."/>
            <person name="Correia C.R.S.T.B."/>
            <person name="Simaroli N.B."/>
            <person name="Oliveira J.S."/>
            <person name="Mevissen T.E.T."/>
            <person name="Medeiros A.C."/>
            <person name="Gomes M.D."/>
            <person name="Komander D."/>
            <person name="Laman H."/>
            <person name="Teixeira F.R."/>
        </authorList>
    </citation>
    <scope>FUNCTION IN UBIQUITINATION OF UXT</scope>
    <scope>SUBCELLULAR LOCATION</scope>
</reference>
<reference key="16">
    <citation type="journal article" date="2022" name="Hum. Mol. Genet.">
        <title>The F-box protein, FBXO7, is required to maintain chromosome stability in humans.</title>
        <authorList>
            <person name="Palmer M.C.L."/>
            <person name="Neudorf N.M."/>
            <person name="Farrell A.C."/>
            <person name="Razi T."/>
            <person name="Lichtensztejn Z."/>
            <person name="McManus K.J."/>
        </authorList>
    </citation>
    <scope>FUNCTION</scope>
</reference>
<reference key="17">
    <citation type="journal article" date="2023" name="J. Biol. Chem.">
        <title>E3 ligase adaptor FBXO7 contributes to ubiquitination and proteasomal degradation of SIRT7 and promotes cell death in response to hydrogen peroxide.</title>
        <authorList>
            <person name="Lee S.H."/>
            <person name="Lee Y.J."/>
            <person name="Jung S."/>
            <person name="Chung K.C."/>
        </authorList>
    </citation>
    <scope>FUNCTION IN UBIQUITINATION OF SIRT7</scope>
    <scope>CHARACTERIZATION OF VARIANT PARK15 GLY-378</scope>
</reference>
<reference key="18">
    <citation type="journal article" date="2014" name="Acta Crystallogr. D">
        <title>Structure of the FP domain of Fbxo7 reveals a novel mode of protein-protein interaction.</title>
        <authorList>
            <person name="Shang J."/>
            <person name="Wang G."/>
            <person name="Yang Y."/>
            <person name="Huang X."/>
            <person name="Du Z."/>
        </authorList>
    </citation>
    <scope>X-RAY CRYSTALLOGRAPHY (2.00 ANGSTROMS) OF 180-335</scope>
</reference>
<reference key="19">
    <citation type="journal article" date="2008" name="Am. J. Hum. Genet.">
        <title>Genome-wide linkage analysis of a Parkinsonian-pyramidal syndrome pedigree by 500 K SNP arrays.</title>
        <authorList>
            <person name="Shojaee S."/>
            <person name="Sina F."/>
            <person name="Banihosseini S.S."/>
            <person name="Kazemi M.H."/>
            <person name="Kalhor R."/>
            <person name="Shahidi G.-A."/>
            <person name="Fakhrai-Rad H."/>
            <person name="Ronaghi M."/>
            <person name="Elahi E."/>
        </authorList>
    </citation>
    <scope>VARIANT PARK15 GLY-378</scope>
    <scope>VARIANT ILE-115</scope>
</reference>
<reference key="20">
    <citation type="journal article" date="2011" name="Neurogenetics">
        <title>Novel ATP13A2 (PARK9) homozygous mutation in a family with marked phenotype variability.</title>
        <authorList>
            <person name="Santoro L."/>
            <person name="Breedveld G.J."/>
            <person name="Manganelli F."/>
            <person name="Iodice R."/>
            <person name="Pisciotta C."/>
            <person name="Nolano M."/>
            <person name="Punzo F."/>
            <person name="Quarantelli M."/>
            <person name="Pappata S."/>
            <person name="Di Fonzo A."/>
            <person name="Oostra B.A."/>
            <person name="Bonifati V."/>
        </authorList>
    </citation>
    <scope>VARIANT CYS-481</scope>
</reference>
<reference key="21">
    <citation type="journal article" date="2020" name="Acta Neuropathol.">
        <title>Segregation of ATP10B variants in families with autosomal recessive parkinsonism.</title>
        <authorList>
            <person name="Tesson C."/>
            <person name="Lohmann E."/>
            <person name="Devos D."/>
            <person name="Bertrand H."/>
            <person name="Lesage S."/>
            <person name="Brice A."/>
        </authorList>
    </citation>
    <scope>VARIANT PARK15 ARG-34</scope>
</reference>